<gene>
    <name evidence="1" type="primary">ybaB</name>
    <name type="ordered locus">Z0588</name>
    <name type="ordered locus">ECs0524</name>
</gene>
<comment type="function">
    <text evidence="1">Binds to DNA and alters its conformation. May be involved in regulation of gene expression, nucleoid organization and DNA protection.</text>
</comment>
<comment type="subunit">
    <text evidence="1">Homodimer.</text>
</comment>
<comment type="subcellular location">
    <subcellularLocation>
        <location evidence="1">Cytoplasm</location>
        <location evidence="1">Nucleoid</location>
    </subcellularLocation>
</comment>
<comment type="similarity">
    <text evidence="1">Belongs to the YbaB/EbfC family.</text>
</comment>
<keyword id="KW-0963">Cytoplasm</keyword>
<keyword id="KW-0238">DNA-binding</keyword>
<keyword id="KW-1185">Reference proteome</keyword>
<dbReference type="EMBL" id="AE005174">
    <property type="protein sequence ID" value="AAG54820.1"/>
    <property type="molecule type" value="Genomic_DNA"/>
</dbReference>
<dbReference type="EMBL" id="BA000007">
    <property type="protein sequence ID" value="BAB33947.1"/>
    <property type="molecule type" value="Genomic_DNA"/>
</dbReference>
<dbReference type="PIR" id="D90694">
    <property type="entry name" value="D90694"/>
</dbReference>
<dbReference type="PIR" id="H85544">
    <property type="entry name" value="H85544"/>
</dbReference>
<dbReference type="RefSeq" id="NP_308551.1">
    <property type="nucleotide sequence ID" value="NC_002695.1"/>
</dbReference>
<dbReference type="RefSeq" id="WP_000467098.1">
    <property type="nucleotide sequence ID" value="NZ_VOAI01000005.1"/>
</dbReference>
<dbReference type="SMR" id="P0A8B7"/>
<dbReference type="STRING" id="155864.Z0588"/>
<dbReference type="GeneID" id="914628"/>
<dbReference type="KEGG" id="ece:Z0588"/>
<dbReference type="KEGG" id="ecs:ECs_0524"/>
<dbReference type="PATRIC" id="fig|386585.9.peg.630"/>
<dbReference type="eggNOG" id="COG0718">
    <property type="taxonomic scope" value="Bacteria"/>
</dbReference>
<dbReference type="HOGENOM" id="CLU_140930_0_0_6"/>
<dbReference type="OMA" id="MGNMMKQ"/>
<dbReference type="Proteomes" id="UP000000558">
    <property type="component" value="Chromosome"/>
</dbReference>
<dbReference type="Proteomes" id="UP000002519">
    <property type="component" value="Chromosome"/>
</dbReference>
<dbReference type="GO" id="GO:0043590">
    <property type="term" value="C:bacterial nucleoid"/>
    <property type="evidence" value="ECO:0007669"/>
    <property type="project" value="UniProtKB-UniRule"/>
</dbReference>
<dbReference type="GO" id="GO:0005829">
    <property type="term" value="C:cytosol"/>
    <property type="evidence" value="ECO:0007669"/>
    <property type="project" value="TreeGrafter"/>
</dbReference>
<dbReference type="GO" id="GO:0003677">
    <property type="term" value="F:DNA binding"/>
    <property type="evidence" value="ECO:0007669"/>
    <property type="project" value="UniProtKB-UniRule"/>
</dbReference>
<dbReference type="FunFam" id="3.30.1310.10:FF:000001">
    <property type="entry name" value="Nucleoid-associated protein YbaB"/>
    <property type="match status" value="1"/>
</dbReference>
<dbReference type="Gene3D" id="3.30.1310.10">
    <property type="entry name" value="Nucleoid-associated protein YbaB-like domain"/>
    <property type="match status" value="1"/>
</dbReference>
<dbReference type="HAMAP" id="MF_00274">
    <property type="entry name" value="DNA_YbaB_EbfC"/>
    <property type="match status" value="1"/>
</dbReference>
<dbReference type="InterPro" id="IPR036894">
    <property type="entry name" value="YbaB-like_sf"/>
</dbReference>
<dbReference type="InterPro" id="IPR004401">
    <property type="entry name" value="YbaB/EbfC"/>
</dbReference>
<dbReference type="NCBIfam" id="TIGR00103">
    <property type="entry name" value="DNA_YbaB_EbfC"/>
    <property type="match status" value="1"/>
</dbReference>
<dbReference type="PANTHER" id="PTHR33449">
    <property type="entry name" value="NUCLEOID-ASSOCIATED PROTEIN YBAB"/>
    <property type="match status" value="1"/>
</dbReference>
<dbReference type="PANTHER" id="PTHR33449:SF1">
    <property type="entry name" value="NUCLEOID-ASSOCIATED PROTEIN YBAB"/>
    <property type="match status" value="1"/>
</dbReference>
<dbReference type="Pfam" id="PF02575">
    <property type="entry name" value="YbaB_DNA_bd"/>
    <property type="match status" value="1"/>
</dbReference>
<dbReference type="PIRSF" id="PIRSF004555">
    <property type="entry name" value="UCP004555"/>
    <property type="match status" value="1"/>
</dbReference>
<dbReference type="SUPFAM" id="SSF82607">
    <property type="entry name" value="YbaB-like"/>
    <property type="match status" value="1"/>
</dbReference>
<sequence>MFGKGGLGNLMKQAQQMQEKMQKMQEEIAQLEVTGESGAGLVKVTINGAHNCRRVEIDPSLLEDDKEMLEDLVAAAFNDAARRIEETQKEKMASVSSGMQLPPGFKMPF</sequence>
<protein>
    <recommendedName>
        <fullName evidence="1">Nucleoid-associated protein YbaB</fullName>
    </recommendedName>
</protein>
<accession>P0A8B7</accession>
<accession>P09994</accession>
<accession>P17577</accession>
<feature type="chain" id="PRO_0000170393" description="Nucleoid-associated protein YbaB">
    <location>
        <begin position="1"/>
        <end position="109"/>
    </location>
</feature>
<evidence type="ECO:0000255" key="1">
    <source>
        <dbReference type="HAMAP-Rule" id="MF_00274"/>
    </source>
</evidence>
<proteinExistence type="inferred from homology"/>
<reference key="1">
    <citation type="journal article" date="2001" name="Nature">
        <title>Genome sequence of enterohaemorrhagic Escherichia coli O157:H7.</title>
        <authorList>
            <person name="Perna N.T."/>
            <person name="Plunkett G. III"/>
            <person name="Burland V."/>
            <person name="Mau B."/>
            <person name="Glasner J.D."/>
            <person name="Rose D.J."/>
            <person name="Mayhew G.F."/>
            <person name="Evans P.S."/>
            <person name="Gregor J."/>
            <person name="Kirkpatrick H.A."/>
            <person name="Posfai G."/>
            <person name="Hackett J."/>
            <person name="Klink S."/>
            <person name="Boutin A."/>
            <person name="Shao Y."/>
            <person name="Miller L."/>
            <person name="Grotbeck E.J."/>
            <person name="Davis N.W."/>
            <person name="Lim A."/>
            <person name="Dimalanta E.T."/>
            <person name="Potamousis K."/>
            <person name="Apodaca J."/>
            <person name="Anantharaman T.S."/>
            <person name="Lin J."/>
            <person name="Yen G."/>
            <person name="Schwartz D.C."/>
            <person name="Welch R.A."/>
            <person name="Blattner F.R."/>
        </authorList>
    </citation>
    <scope>NUCLEOTIDE SEQUENCE [LARGE SCALE GENOMIC DNA]</scope>
    <source>
        <strain>O157:H7 / EDL933 / ATCC 700927 / EHEC</strain>
    </source>
</reference>
<reference key="2">
    <citation type="journal article" date="2001" name="DNA Res.">
        <title>Complete genome sequence of enterohemorrhagic Escherichia coli O157:H7 and genomic comparison with a laboratory strain K-12.</title>
        <authorList>
            <person name="Hayashi T."/>
            <person name="Makino K."/>
            <person name="Ohnishi M."/>
            <person name="Kurokawa K."/>
            <person name="Ishii K."/>
            <person name="Yokoyama K."/>
            <person name="Han C.-G."/>
            <person name="Ohtsubo E."/>
            <person name="Nakayama K."/>
            <person name="Murata T."/>
            <person name="Tanaka M."/>
            <person name="Tobe T."/>
            <person name="Iida T."/>
            <person name="Takami H."/>
            <person name="Honda T."/>
            <person name="Sasakawa C."/>
            <person name="Ogasawara N."/>
            <person name="Yasunaga T."/>
            <person name="Kuhara S."/>
            <person name="Shiba T."/>
            <person name="Hattori M."/>
            <person name="Shinagawa H."/>
        </authorList>
    </citation>
    <scope>NUCLEOTIDE SEQUENCE [LARGE SCALE GENOMIC DNA]</scope>
    <source>
        <strain>O157:H7 / Sakai / RIMD 0509952 / EHEC</strain>
    </source>
</reference>
<name>YBAB_ECO57</name>
<organism>
    <name type="scientific">Escherichia coli O157:H7</name>
    <dbReference type="NCBI Taxonomy" id="83334"/>
    <lineage>
        <taxon>Bacteria</taxon>
        <taxon>Pseudomonadati</taxon>
        <taxon>Pseudomonadota</taxon>
        <taxon>Gammaproteobacteria</taxon>
        <taxon>Enterobacterales</taxon>
        <taxon>Enterobacteriaceae</taxon>
        <taxon>Escherichia</taxon>
    </lineage>
</organism>